<keyword id="KW-0028">Amino-acid biosynthesis</keyword>
<keyword id="KW-0997">Cell inner membrane</keyword>
<keyword id="KW-1003">Cell membrane</keyword>
<keyword id="KW-0198">Cysteine biosynthesis</keyword>
<keyword id="KW-0472">Membrane</keyword>
<keyword id="KW-0764">Sulfate transport</keyword>
<keyword id="KW-0812">Transmembrane</keyword>
<keyword id="KW-1133">Transmembrane helix</keyword>
<keyword id="KW-0813">Transport</keyword>
<name>CYSZ_VIBCM</name>
<dbReference type="EMBL" id="CP001233">
    <property type="protein sequence ID" value="ACP05243.1"/>
    <property type="molecule type" value="Genomic_DNA"/>
</dbReference>
<dbReference type="RefSeq" id="WP_001167409.1">
    <property type="nucleotide sequence ID" value="NC_012578.1"/>
</dbReference>
<dbReference type="SMR" id="C3LTL7"/>
<dbReference type="KEGG" id="vcm:VCM66_0925"/>
<dbReference type="HOGENOM" id="CLU_070331_1_0_6"/>
<dbReference type="Proteomes" id="UP000001217">
    <property type="component" value="Chromosome I"/>
</dbReference>
<dbReference type="GO" id="GO:0005886">
    <property type="term" value="C:plasma membrane"/>
    <property type="evidence" value="ECO:0007669"/>
    <property type="project" value="UniProtKB-SubCell"/>
</dbReference>
<dbReference type="GO" id="GO:0009675">
    <property type="term" value="F:high-affinity sulfate:proton symporter activity"/>
    <property type="evidence" value="ECO:0007669"/>
    <property type="project" value="TreeGrafter"/>
</dbReference>
<dbReference type="GO" id="GO:0019344">
    <property type="term" value="P:cysteine biosynthetic process"/>
    <property type="evidence" value="ECO:0007669"/>
    <property type="project" value="UniProtKB-UniRule"/>
</dbReference>
<dbReference type="GO" id="GO:0000103">
    <property type="term" value="P:sulfate assimilation"/>
    <property type="evidence" value="ECO:0007669"/>
    <property type="project" value="InterPro"/>
</dbReference>
<dbReference type="HAMAP" id="MF_00468">
    <property type="entry name" value="CysZ"/>
    <property type="match status" value="1"/>
</dbReference>
<dbReference type="InterPro" id="IPR050480">
    <property type="entry name" value="CysZ_sulfate_transptr"/>
</dbReference>
<dbReference type="InterPro" id="IPR022985">
    <property type="entry name" value="Sulfate_CysZ"/>
</dbReference>
<dbReference type="NCBIfam" id="NF003433">
    <property type="entry name" value="PRK04949.1"/>
    <property type="match status" value="1"/>
</dbReference>
<dbReference type="PANTHER" id="PTHR37468">
    <property type="entry name" value="SULFATE TRANSPORTER CYSZ"/>
    <property type="match status" value="1"/>
</dbReference>
<dbReference type="PANTHER" id="PTHR37468:SF1">
    <property type="entry name" value="SULFATE TRANSPORTER CYSZ"/>
    <property type="match status" value="1"/>
</dbReference>
<dbReference type="Pfam" id="PF07264">
    <property type="entry name" value="EI24"/>
    <property type="match status" value="1"/>
</dbReference>
<evidence type="ECO:0000255" key="1">
    <source>
        <dbReference type="HAMAP-Rule" id="MF_00468"/>
    </source>
</evidence>
<accession>C3LTL7</accession>
<sequence length="250" mass="28427">MQISSRSGFGYFSYGIRLALTPGIRRFVVLPLLANIILVGGAMYYLFSHLDTWISEWIGQLPSFLSWLSYVLWPLLALTILATFSYFFSTLANFIASPFNGLLAEKVEQHLSGERIGEEGVWALVKDVPRILSREWRKLLYVLPKALGLFLLLLIPALGQTLGPIAWFLFTAWMLAIQYCDYPFDNHKISFHDMRNTLKQNQSKAYGFGMLVAFFTSIPIVNLFIVPVAVCGATAMWVMEFKTQHSPLRQ</sequence>
<feature type="chain" id="PRO_1000135455" description="Sulfate transporter CysZ">
    <location>
        <begin position="1"/>
        <end position="250"/>
    </location>
</feature>
<feature type="transmembrane region" description="Helical" evidence="1">
    <location>
        <begin position="27"/>
        <end position="47"/>
    </location>
</feature>
<feature type="transmembrane region" description="Helical" evidence="1">
    <location>
        <begin position="64"/>
        <end position="84"/>
    </location>
</feature>
<feature type="transmembrane region" description="Helical" evidence="1">
    <location>
        <begin position="150"/>
        <end position="170"/>
    </location>
</feature>
<feature type="transmembrane region" description="Helical" evidence="1">
    <location>
        <begin position="210"/>
        <end position="230"/>
    </location>
</feature>
<proteinExistence type="inferred from homology"/>
<protein>
    <recommendedName>
        <fullName evidence="1">Sulfate transporter CysZ</fullName>
    </recommendedName>
</protein>
<comment type="function">
    <text evidence="1">High affinity, high specificity proton-dependent sulfate transporter, which mediates sulfate uptake. Provides the sulfur source for the cysteine synthesis pathway.</text>
</comment>
<comment type="subcellular location">
    <subcellularLocation>
        <location evidence="1">Cell inner membrane</location>
        <topology evidence="1">Multi-pass membrane protein</topology>
    </subcellularLocation>
</comment>
<comment type="similarity">
    <text evidence="1">Belongs to the CysZ family.</text>
</comment>
<organism>
    <name type="scientific">Vibrio cholerae serotype O1 (strain M66-2)</name>
    <dbReference type="NCBI Taxonomy" id="579112"/>
    <lineage>
        <taxon>Bacteria</taxon>
        <taxon>Pseudomonadati</taxon>
        <taxon>Pseudomonadota</taxon>
        <taxon>Gammaproteobacteria</taxon>
        <taxon>Vibrionales</taxon>
        <taxon>Vibrionaceae</taxon>
        <taxon>Vibrio</taxon>
    </lineage>
</organism>
<gene>
    <name evidence="1" type="primary">cysZ</name>
    <name type="ordered locus">VCM66_0925</name>
</gene>
<reference key="1">
    <citation type="journal article" date="2008" name="PLoS ONE">
        <title>A recalibrated molecular clock and independent origins for the cholera pandemic clones.</title>
        <authorList>
            <person name="Feng L."/>
            <person name="Reeves P.R."/>
            <person name="Lan R."/>
            <person name="Ren Y."/>
            <person name="Gao C."/>
            <person name="Zhou Z."/>
            <person name="Ren Y."/>
            <person name="Cheng J."/>
            <person name="Wang W."/>
            <person name="Wang J."/>
            <person name="Qian W."/>
            <person name="Li D."/>
            <person name="Wang L."/>
        </authorList>
    </citation>
    <scope>NUCLEOTIDE SEQUENCE [LARGE SCALE GENOMIC DNA]</scope>
    <source>
        <strain>M66-2</strain>
    </source>
</reference>